<keyword id="KW-0186">Copper</keyword>
<keyword id="KW-0479">Metal-binding</keyword>
<keyword id="KW-0574">Periplasm</keyword>
<keyword id="KW-1185">Reference proteome</keyword>
<keyword id="KW-0732">Signal</keyword>
<reference key="1">
    <citation type="journal article" date="2002" name="Nucleic Acids Res.">
        <title>Genome sequence of Shigella flexneri 2a: insights into pathogenicity through comparison with genomes of Escherichia coli K12 and O157.</title>
        <authorList>
            <person name="Jin Q."/>
            <person name="Yuan Z."/>
            <person name="Xu J."/>
            <person name="Wang Y."/>
            <person name="Shen Y."/>
            <person name="Lu W."/>
            <person name="Wang J."/>
            <person name="Liu H."/>
            <person name="Yang J."/>
            <person name="Yang F."/>
            <person name="Zhang X."/>
            <person name="Zhang J."/>
            <person name="Yang G."/>
            <person name="Wu H."/>
            <person name="Qu D."/>
            <person name="Dong J."/>
            <person name="Sun L."/>
            <person name="Xue Y."/>
            <person name="Zhao A."/>
            <person name="Gao Y."/>
            <person name="Zhu J."/>
            <person name="Kan B."/>
            <person name="Ding K."/>
            <person name="Chen S."/>
            <person name="Cheng H."/>
            <person name="Yao Z."/>
            <person name="He B."/>
            <person name="Chen R."/>
            <person name="Ma D."/>
            <person name="Qiang B."/>
            <person name="Wen Y."/>
            <person name="Hou Y."/>
            <person name="Yu J."/>
        </authorList>
    </citation>
    <scope>NUCLEOTIDE SEQUENCE [LARGE SCALE GENOMIC DNA]</scope>
    <source>
        <strain>301 / Serotype 2a</strain>
    </source>
</reference>
<reference key="2">
    <citation type="journal article" date="2003" name="Infect. Immun.">
        <title>Complete genome sequence and comparative genomics of Shigella flexneri serotype 2a strain 2457T.</title>
        <authorList>
            <person name="Wei J."/>
            <person name="Goldberg M.B."/>
            <person name="Burland V."/>
            <person name="Venkatesan M.M."/>
            <person name="Deng W."/>
            <person name="Fournier G."/>
            <person name="Mayhew G.F."/>
            <person name="Plunkett G. III"/>
            <person name="Rose D.J."/>
            <person name="Darling A."/>
            <person name="Mau B."/>
            <person name="Perna N.T."/>
            <person name="Payne S.M."/>
            <person name="Runyen-Janecky L.J."/>
            <person name="Zhou S."/>
            <person name="Schwartz D.C."/>
            <person name="Blattner F.R."/>
        </authorList>
    </citation>
    <scope>NUCLEOTIDE SEQUENCE [LARGE SCALE GENOMIC DNA]</scope>
    <source>
        <strain>ATCC 700930 / 2457T / Serotype 2a</strain>
    </source>
</reference>
<evidence type="ECO:0000250" key="1"/>
<evidence type="ECO:0000255" key="2"/>
<evidence type="ECO:0000305" key="3"/>
<protein>
    <recommendedName>
        <fullName>Protein YobA</fullName>
    </recommendedName>
</protein>
<feature type="signal peptide" evidence="2">
    <location>
        <begin position="1"/>
        <end position="26"/>
    </location>
</feature>
<feature type="chain" id="PRO_0000041961" description="Protein YobA">
    <location>
        <begin position="27"/>
        <end position="124"/>
    </location>
</feature>
<feature type="binding site" evidence="2">
    <location>
        <position position="27"/>
    </location>
    <ligand>
        <name>Cu cation</name>
        <dbReference type="ChEBI" id="CHEBI:23378"/>
    </ligand>
</feature>
<feature type="binding site" evidence="2">
    <location>
        <position position="113"/>
    </location>
    <ligand>
        <name>Cu cation</name>
        <dbReference type="ChEBI" id="CHEBI:23378"/>
    </ligand>
</feature>
<dbReference type="EMBL" id="AE005674">
    <property type="protein sequence ID" value="AAN43411.1"/>
    <property type="molecule type" value="Genomic_DNA"/>
</dbReference>
<dbReference type="EMBL" id="AE014073">
    <property type="protein sequence ID" value="AAP17233.1"/>
    <property type="molecule type" value="Genomic_DNA"/>
</dbReference>
<dbReference type="RefSeq" id="NP_707704.1">
    <property type="nucleotide sequence ID" value="NC_004337.2"/>
</dbReference>
<dbReference type="RefSeq" id="WP_000168747.1">
    <property type="nucleotide sequence ID" value="NZ_WPGW01000041.1"/>
</dbReference>
<dbReference type="SMR" id="P0AA59"/>
<dbReference type="STRING" id="198214.SF1852"/>
<dbReference type="PaxDb" id="198214-SF1852"/>
<dbReference type="GeneID" id="1025006"/>
<dbReference type="GeneID" id="75171912"/>
<dbReference type="KEGG" id="sfl:SF1852"/>
<dbReference type="KEGG" id="sfx:S1917"/>
<dbReference type="PATRIC" id="fig|198214.7.peg.2205"/>
<dbReference type="HOGENOM" id="CLU_087859_4_2_6"/>
<dbReference type="Proteomes" id="UP000001006">
    <property type="component" value="Chromosome"/>
</dbReference>
<dbReference type="Proteomes" id="UP000002673">
    <property type="component" value="Chromosome"/>
</dbReference>
<dbReference type="GO" id="GO:0042597">
    <property type="term" value="C:periplasmic space"/>
    <property type="evidence" value="ECO:0007669"/>
    <property type="project" value="UniProtKB-SubCell"/>
</dbReference>
<dbReference type="GO" id="GO:0005886">
    <property type="term" value="C:plasma membrane"/>
    <property type="evidence" value="ECO:0007669"/>
    <property type="project" value="TreeGrafter"/>
</dbReference>
<dbReference type="GO" id="GO:0005507">
    <property type="term" value="F:copper ion binding"/>
    <property type="evidence" value="ECO:0007669"/>
    <property type="project" value="InterPro"/>
</dbReference>
<dbReference type="GO" id="GO:0006825">
    <property type="term" value="P:copper ion transport"/>
    <property type="evidence" value="ECO:0007669"/>
    <property type="project" value="InterPro"/>
</dbReference>
<dbReference type="GO" id="GO:0046688">
    <property type="term" value="P:response to copper ion"/>
    <property type="evidence" value="ECO:0007669"/>
    <property type="project" value="InterPro"/>
</dbReference>
<dbReference type="FunFam" id="2.60.40.1220:FF:000001">
    <property type="entry name" value="CopC domain-containing protein YobA"/>
    <property type="match status" value="1"/>
</dbReference>
<dbReference type="Gene3D" id="2.60.40.1220">
    <property type="match status" value="1"/>
</dbReference>
<dbReference type="InterPro" id="IPR047685">
    <property type="entry name" value="CopC-like"/>
</dbReference>
<dbReference type="InterPro" id="IPR032694">
    <property type="entry name" value="CopC/D"/>
</dbReference>
<dbReference type="InterPro" id="IPR007348">
    <property type="entry name" value="CopC_dom"/>
</dbReference>
<dbReference type="InterPro" id="IPR014755">
    <property type="entry name" value="Cu-Rt/internalin_Ig-like"/>
</dbReference>
<dbReference type="InterPro" id="IPR014756">
    <property type="entry name" value="Ig_E-set"/>
</dbReference>
<dbReference type="NCBIfam" id="NF033814">
    <property type="entry name" value="copper_CopC"/>
    <property type="match status" value="1"/>
</dbReference>
<dbReference type="NCBIfam" id="NF007636">
    <property type="entry name" value="PRK10301.1"/>
    <property type="match status" value="1"/>
</dbReference>
<dbReference type="PANTHER" id="PTHR34820">
    <property type="entry name" value="INNER MEMBRANE PROTEIN YEBZ"/>
    <property type="match status" value="1"/>
</dbReference>
<dbReference type="PANTHER" id="PTHR34820:SF4">
    <property type="entry name" value="INNER MEMBRANE PROTEIN YEBZ"/>
    <property type="match status" value="1"/>
</dbReference>
<dbReference type="Pfam" id="PF04234">
    <property type="entry name" value="CopC"/>
    <property type="match status" value="1"/>
</dbReference>
<dbReference type="SUPFAM" id="SSF81296">
    <property type="entry name" value="E set domains"/>
    <property type="match status" value="1"/>
</dbReference>
<gene>
    <name type="primary">yobA</name>
    <name type="ordered locus">SF1852</name>
    <name type="ordered locus">S1917</name>
</gene>
<comment type="subcellular location">
    <subcellularLocation>
        <location evidence="1">Periplasm</location>
    </subcellularLocation>
</comment>
<comment type="similarity">
    <text evidence="3">Belongs to the CopC family.</text>
</comment>
<sequence length="124" mass="13410">MASTARSLRYALAILTTSLVTPSVWAHAHLTHQYPAANAQVTAAPQAITLNFSEGVETGFSGAKITGPKNENIKTLPAKRNEQDQKQLIVPLADSLKPGTYTVDWHVVSVDGHKTKGHYTFSVK</sequence>
<name>YOBA_SHIFL</name>
<proteinExistence type="inferred from homology"/>
<organism>
    <name type="scientific">Shigella flexneri</name>
    <dbReference type="NCBI Taxonomy" id="623"/>
    <lineage>
        <taxon>Bacteria</taxon>
        <taxon>Pseudomonadati</taxon>
        <taxon>Pseudomonadota</taxon>
        <taxon>Gammaproteobacteria</taxon>
        <taxon>Enterobacterales</taxon>
        <taxon>Enterobacteriaceae</taxon>
        <taxon>Shigella</taxon>
    </lineage>
</organism>
<accession>P0AA59</accession>
<accession>P76279</accession>